<gene>
    <name evidence="1" type="primary">cca</name>
    <name type="ordered locus">Bcen_2417</name>
</gene>
<dbReference type="EC" id="2.7.7.72" evidence="1"/>
<dbReference type="EC" id="3.1.3.-" evidence="1"/>
<dbReference type="EC" id="3.1.4.-" evidence="1"/>
<dbReference type="EMBL" id="CP000378">
    <property type="protein sequence ID" value="ABF77316.1"/>
    <property type="molecule type" value="Genomic_DNA"/>
</dbReference>
<dbReference type="SMR" id="Q1BST9"/>
<dbReference type="HOGENOM" id="CLU_015961_1_1_4"/>
<dbReference type="GO" id="GO:0005524">
    <property type="term" value="F:ATP binding"/>
    <property type="evidence" value="ECO:0007669"/>
    <property type="project" value="UniProtKB-UniRule"/>
</dbReference>
<dbReference type="GO" id="GO:0004810">
    <property type="term" value="F:CCA tRNA nucleotidyltransferase activity"/>
    <property type="evidence" value="ECO:0007669"/>
    <property type="project" value="UniProtKB-UniRule"/>
</dbReference>
<dbReference type="GO" id="GO:0004112">
    <property type="term" value="F:cyclic-nucleotide phosphodiesterase activity"/>
    <property type="evidence" value="ECO:0007669"/>
    <property type="project" value="UniProtKB-UniRule"/>
</dbReference>
<dbReference type="GO" id="GO:0000287">
    <property type="term" value="F:magnesium ion binding"/>
    <property type="evidence" value="ECO:0007669"/>
    <property type="project" value="UniProtKB-UniRule"/>
</dbReference>
<dbReference type="GO" id="GO:0016791">
    <property type="term" value="F:phosphatase activity"/>
    <property type="evidence" value="ECO:0007669"/>
    <property type="project" value="UniProtKB-UniRule"/>
</dbReference>
<dbReference type="GO" id="GO:0000049">
    <property type="term" value="F:tRNA binding"/>
    <property type="evidence" value="ECO:0007669"/>
    <property type="project" value="UniProtKB-UniRule"/>
</dbReference>
<dbReference type="GO" id="GO:0042245">
    <property type="term" value="P:RNA repair"/>
    <property type="evidence" value="ECO:0007669"/>
    <property type="project" value="UniProtKB-KW"/>
</dbReference>
<dbReference type="GO" id="GO:0001680">
    <property type="term" value="P:tRNA 3'-terminal CCA addition"/>
    <property type="evidence" value="ECO:0007669"/>
    <property type="project" value="UniProtKB-UniRule"/>
</dbReference>
<dbReference type="CDD" id="cd05398">
    <property type="entry name" value="NT_ClassII-CCAase"/>
    <property type="match status" value="1"/>
</dbReference>
<dbReference type="Gene3D" id="3.30.460.10">
    <property type="entry name" value="Beta Polymerase, domain 2"/>
    <property type="match status" value="1"/>
</dbReference>
<dbReference type="Gene3D" id="1.10.3090.10">
    <property type="entry name" value="cca-adding enzyme, domain 2"/>
    <property type="match status" value="1"/>
</dbReference>
<dbReference type="HAMAP" id="MF_01261">
    <property type="entry name" value="CCA_bact_type1"/>
    <property type="match status" value="1"/>
</dbReference>
<dbReference type="HAMAP" id="MF_01262">
    <property type="entry name" value="CCA_bact_type2"/>
    <property type="match status" value="1"/>
</dbReference>
<dbReference type="InterPro" id="IPR012006">
    <property type="entry name" value="CCA_bact"/>
</dbReference>
<dbReference type="InterPro" id="IPR006674">
    <property type="entry name" value="HD_domain"/>
</dbReference>
<dbReference type="InterPro" id="IPR043519">
    <property type="entry name" value="NT_sf"/>
</dbReference>
<dbReference type="InterPro" id="IPR002646">
    <property type="entry name" value="PolA_pol_head_dom"/>
</dbReference>
<dbReference type="InterPro" id="IPR032828">
    <property type="entry name" value="PolyA_RNA-bd"/>
</dbReference>
<dbReference type="InterPro" id="IPR050124">
    <property type="entry name" value="tRNA_CCA-adding_enzyme"/>
</dbReference>
<dbReference type="NCBIfam" id="NF008137">
    <property type="entry name" value="PRK10885.1"/>
    <property type="match status" value="1"/>
</dbReference>
<dbReference type="PANTHER" id="PTHR47545">
    <property type="entry name" value="MULTIFUNCTIONAL CCA PROTEIN"/>
    <property type="match status" value="1"/>
</dbReference>
<dbReference type="PANTHER" id="PTHR47545:SF1">
    <property type="entry name" value="MULTIFUNCTIONAL CCA PROTEIN"/>
    <property type="match status" value="1"/>
</dbReference>
<dbReference type="Pfam" id="PF01966">
    <property type="entry name" value="HD"/>
    <property type="match status" value="1"/>
</dbReference>
<dbReference type="Pfam" id="PF01743">
    <property type="entry name" value="PolyA_pol"/>
    <property type="match status" value="1"/>
</dbReference>
<dbReference type="Pfam" id="PF12627">
    <property type="entry name" value="PolyA_pol_RNAbd"/>
    <property type="match status" value="1"/>
</dbReference>
<dbReference type="PIRSF" id="PIRSF000813">
    <property type="entry name" value="CCA_bact"/>
    <property type="match status" value="1"/>
</dbReference>
<dbReference type="SUPFAM" id="SSF81301">
    <property type="entry name" value="Nucleotidyltransferase"/>
    <property type="match status" value="1"/>
</dbReference>
<dbReference type="SUPFAM" id="SSF81891">
    <property type="entry name" value="Poly A polymerase C-terminal region-like"/>
    <property type="match status" value="1"/>
</dbReference>
<dbReference type="PROSITE" id="PS51831">
    <property type="entry name" value="HD"/>
    <property type="match status" value="1"/>
</dbReference>
<keyword id="KW-0067">ATP-binding</keyword>
<keyword id="KW-0378">Hydrolase</keyword>
<keyword id="KW-0460">Magnesium</keyword>
<keyword id="KW-0479">Metal-binding</keyword>
<keyword id="KW-0511">Multifunctional enzyme</keyword>
<keyword id="KW-0533">Nickel</keyword>
<keyword id="KW-0547">Nucleotide-binding</keyword>
<keyword id="KW-0548">Nucleotidyltransferase</keyword>
<keyword id="KW-0692">RNA repair</keyword>
<keyword id="KW-0694">RNA-binding</keyword>
<keyword id="KW-0808">Transferase</keyword>
<keyword id="KW-0819">tRNA processing</keyword>
<proteinExistence type="inferred from homology"/>
<protein>
    <recommendedName>
        <fullName evidence="1">Multifunctional CCA protein</fullName>
    </recommendedName>
    <domain>
        <recommendedName>
            <fullName evidence="1">CCA-adding enzyme</fullName>
            <ecNumber evidence="1">2.7.7.72</ecNumber>
        </recommendedName>
        <alternativeName>
            <fullName evidence="1">CCA tRNA nucleotidyltransferase</fullName>
        </alternativeName>
        <alternativeName>
            <fullName evidence="1">tRNA CCA-pyrophosphorylase</fullName>
        </alternativeName>
        <alternativeName>
            <fullName evidence="1">tRNA adenylyl-/cytidylyl-transferase</fullName>
        </alternativeName>
        <alternativeName>
            <fullName evidence="1">tRNA nucleotidyltransferase</fullName>
        </alternativeName>
        <alternativeName>
            <fullName evidence="1">tRNA-NT</fullName>
        </alternativeName>
    </domain>
    <domain>
        <recommendedName>
            <fullName evidence="1">2'-nucleotidase</fullName>
            <ecNumber evidence="1">3.1.3.-</ecNumber>
        </recommendedName>
    </domain>
    <domain>
        <recommendedName>
            <fullName evidence="1">2',3'-cyclic phosphodiesterase</fullName>
            <ecNumber evidence="1">3.1.4.-</ecNumber>
        </recommendedName>
    </domain>
    <domain>
        <recommendedName>
            <fullName evidence="1">Phosphatase</fullName>
            <ecNumber evidence="1">3.1.3.-</ecNumber>
        </recommendedName>
    </domain>
</protein>
<organism>
    <name type="scientific">Burkholderia orbicola (strain AU 1054)</name>
    <dbReference type="NCBI Taxonomy" id="331271"/>
    <lineage>
        <taxon>Bacteria</taxon>
        <taxon>Pseudomonadati</taxon>
        <taxon>Pseudomonadota</taxon>
        <taxon>Betaproteobacteria</taxon>
        <taxon>Burkholderiales</taxon>
        <taxon>Burkholderiaceae</taxon>
        <taxon>Burkholderia</taxon>
        <taxon>Burkholderia cepacia complex</taxon>
        <taxon>Burkholderia orbicola</taxon>
    </lineage>
</organism>
<sequence length="413" mass="45489">MNIYAVGGAIRDELLGVPVQDRDYVVVGATPEQMTAQGFRAVGKDFPVFLHPQTQEEYALARTERKTAAGYHGFQFHYAPDVTLDEDLARRDLTINAMAREVSPEGALVGPVIDPFDGQADLRARVFRHVSDAFVEDPVRILRIARFAARFADFTVADETLALMRRMVDAGEVDALVPERVWQEIARGLMEAKPSRMFAVLRDCGALARILPEVDALWGVPQRADYHPEVDTGVHVMMVVDYAAKQGYSLAVRFAALTHDLGKGTTPADVLPRHVGHESRSVELLKPLCERLRVPNECRDLALVVAREHGNLHRVMEMGAAALVRLFERSDALRKPARFAELLQACESDARGRLGLDAQPYPQAERLRVALAAARSVDAGAIARGIGNDTEKIKEAVHRARIQAVAQALAIGE</sequence>
<accession>Q1BST9</accession>
<name>CCA_BURO1</name>
<evidence type="ECO:0000255" key="1">
    <source>
        <dbReference type="HAMAP-Rule" id="MF_01261"/>
    </source>
</evidence>
<comment type="function">
    <text evidence="1">Catalyzes the addition and repair of the essential 3'-terminal CCA sequence in tRNAs without using a nucleic acid template. Adds these three nucleotides in the order of C, C, and A to the tRNA nucleotide-73, using CTP and ATP as substrates and producing inorganic pyrophosphate. tRNA 3'-terminal CCA addition is required both for tRNA processing and repair. Also involved in tRNA surveillance by mediating tandem CCA addition to generate a CCACCA at the 3' terminus of unstable tRNAs. While stable tRNAs receive only 3'-terminal CCA, unstable tRNAs are marked with CCACCA and rapidly degraded.</text>
</comment>
<comment type="catalytic activity">
    <reaction evidence="1">
        <text>a tRNA precursor + 2 CTP + ATP = a tRNA with a 3' CCA end + 3 diphosphate</text>
        <dbReference type="Rhea" id="RHEA:14433"/>
        <dbReference type="Rhea" id="RHEA-COMP:10465"/>
        <dbReference type="Rhea" id="RHEA-COMP:10468"/>
        <dbReference type="ChEBI" id="CHEBI:30616"/>
        <dbReference type="ChEBI" id="CHEBI:33019"/>
        <dbReference type="ChEBI" id="CHEBI:37563"/>
        <dbReference type="ChEBI" id="CHEBI:74896"/>
        <dbReference type="ChEBI" id="CHEBI:83071"/>
        <dbReference type="EC" id="2.7.7.72"/>
    </reaction>
</comment>
<comment type="catalytic activity">
    <reaction evidence="1">
        <text>a tRNA with a 3' CCA end + 2 CTP + ATP = a tRNA with a 3' CCACCA end + 3 diphosphate</text>
        <dbReference type="Rhea" id="RHEA:76235"/>
        <dbReference type="Rhea" id="RHEA-COMP:10468"/>
        <dbReference type="Rhea" id="RHEA-COMP:18655"/>
        <dbReference type="ChEBI" id="CHEBI:30616"/>
        <dbReference type="ChEBI" id="CHEBI:33019"/>
        <dbReference type="ChEBI" id="CHEBI:37563"/>
        <dbReference type="ChEBI" id="CHEBI:83071"/>
        <dbReference type="ChEBI" id="CHEBI:195187"/>
    </reaction>
    <physiologicalReaction direction="left-to-right" evidence="1">
        <dbReference type="Rhea" id="RHEA:76236"/>
    </physiologicalReaction>
</comment>
<comment type="cofactor">
    <cofactor evidence="1">
        <name>Mg(2+)</name>
        <dbReference type="ChEBI" id="CHEBI:18420"/>
    </cofactor>
    <text evidence="1">Magnesium is required for nucleotidyltransferase activity.</text>
</comment>
<comment type="cofactor">
    <cofactor evidence="1">
        <name>Ni(2+)</name>
        <dbReference type="ChEBI" id="CHEBI:49786"/>
    </cofactor>
    <text evidence="1">Nickel for phosphatase activity.</text>
</comment>
<comment type="subunit">
    <text evidence="1">Monomer. Can also form homodimers and oligomers.</text>
</comment>
<comment type="domain">
    <text evidence="1">Comprises two domains: an N-terminal domain containing the nucleotidyltransferase activity and a C-terminal HD domain associated with both phosphodiesterase and phosphatase activities.</text>
</comment>
<comment type="miscellaneous">
    <text evidence="1">A single active site specifically recognizes both ATP and CTP and is responsible for their addition.</text>
</comment>
<comment type="similarity">
    <text evidence="1">Belongs to the tRNA nucleotidyltransferase/poly(A) polymerase family. Bacterial CCA-adding enzyme type 1 subfamily.</text>
</comment>
<feature type="chain" id="PRO_1000054250" description="Multifunctional CCA protein">
    <location>
        <begin position="1"/>
        <end position="413"/>
    </location>
</feature>
<feature type="domain" description="HD" evidence="1">
    <location>
        <begin position="232"/>
        <end position="333"/>
    </location>
</feature>
<feature type="binding site" evidence="1">
    <location>
        <position position="8"/>
    </location>
    <ligand>
        <name>ATP</name>
        <dbReference type="ChEBI" id="CHEBI:30616"/>
    </ligand>
</feature>
<feature type="binding site" evidence="1">
    <location>
        <position position="8"/>
    </location>
    <ligand>
        <name>CTP</name>
        <dbReference type="ChEBI" id="CHEBI:37563"/>
    </ligand>
</feature>
<feature type="binding site" evidence="1">
    <location>
        <position position="11"/>
    </location>
    <ligand>
        <name>ATP</name>
        <dbReference type="ChEBI" id="CHEBI:30616"/>
    </ligand>
</feature>
<feature type="binding site" evidence="1">
    <location>
        <position position="11"/>
    </location>
    <ligand>
        <name>CTP</name>
        <dbReference type="ChEBI" id="CHEBI:37563"/>
    </ligand>
</feature>
<feature type="binding site" evidence="1">
    <location>
        <position position="21"/>
    </location>
    <ligand>
        <name>Mg(2+)</name>
        <dbReference type="ChEBI" id="CHEBI:18420"/>
    </ligand>
</feature>
<feature type="binding site" evidence="1">
    <location>
        <position position="23"/>
    </location>
    <ligand>
        <name>Mg(2+)</name>
        <dbReference type="ChEBI" id="CHEBI:18420"/>
    </ligand>
</feature>
<feature type="binding site" evidence="1">
    <location>
        <position position="91"/>
    </location>
    <ligand>
        <name>ATP</name>
        <dbReference type="ChEBI" id="CHEBI:30616"/>
    </ligand>
</feature>
<feature type="binding site" evidence="1">
    <location>
        <position position="91"/>
    </location>
    <ligand>
        <name>CTP</name>
        <dbReference type="ChEBI" id="CHEBI:37563"/>
    </ligand>
</feature>
<feature type="binding site" evidence="1">
    <location>
        <position position="143"/>
    </location>
    <ligand>
        <name>ATP</name>
        <dbReference type="ChEBI" id="CHEBI:30616"/>
    </ligand>
</feature>
<feature type="binding site" evidence="1">
    <location>
        <position position="143"/>
    </location>
    <ligand>
        <name>CTP</name>
        <dbReference type="ChEBI" id="CHEBI:37563"/>
    </ligand>
</feature>
<feature type="binding site" evidence="1">
    <location>
        <position position="146"/>
    </location>
    <ligand>
        <name>ATP</name>
        <dbReference type="ChEBI" id="CHEBI:30616"/>
    </ligand>
</feature>
<feature type="binding site" evidence="1">
    <location>
        <position position="146"/>
    </location>
    <ligand>
        <name>CTP</name>
        <dbReference type="ChEBI" id="CHEBI:37563"/>
    </ligand>
</feature>
<reference key="1">
    <citation type="submission" date="2006-05" db="EMBL/GenBank/DDBJ databases">
        <title>Complete sequence of chromosome 1 of Burkholderia cenocepacia AU 1054.</title>
        <authorList>
            <consortium name="US DOE Joint Genome Institute"/>
            <person name="Copeland A."/>
            <person name="Lucas S."/>
            <person name="Lapidus A."/>
            <person name="Barry K."/>
            <person name="Detter J.C."/>
            <person name="Glavina del Rio T."/>
            <person name="Hammon N."/>
            <person name="Israni S."/>
            <person name="Dalin E."/>
            <person name="Tice H."/>
            <person name="Pitluck S."/>
            <person name="Chain P."/>
            <person name="Malfatti S."/>
            <person name="Shin M."/>
            <person name="Vergez L."/>
            <person name="Schmutz J."/>
            <person name="Larimer F."/>
            <person name="Land M."/>
            <person name="Hauser L."/>
            <person name="Kyrpides N."/>
            <person name="Lykidis A."/>
            <person name="LiPuma J.J."/>
            <person name="Konstantinidis K."/>
            <person name="Tiedje J.M."/>
            <person name="Richardson P."/>
        </authorList>
    </citation>
    <scope>NUCLEOTIDE SEQUENCE [LARGE SCALE GENOMIC DNA]</scope>
    <source>
        <strain>AU 1054</strain>
    </source>
</reference>